<sequence>MTNIRKSHPLIKIVNESFIDLPTPSNISAWWNFGSLLGVCLVLQILTGLFLAMHYTSDTATAFSSVTHICRDVNYGWIIRYMHANGASMFFICLFMHVGRGMYYGSYTFPETWNIGILLLFTTMATAFMGYVLPWGQMSFWGATVITNLLSAIPYIGTSLVEWIWGGFSVNKATLTRFFAFHFILPFIILALAAIHLLFLHETGSNNPSGMTSDTDKIPFHPYYTIKDILGLLLLILMLMLLVLFSPDLLGDPDNYTPANPLNTPPHIKPEWYFLFAYAILRSIPNKLGGVLALILSILILAVVPLLHTSKQRGMMFRPISQCLFWLLVADLLALTWIGGQPVEYPFITIGQLASITYFSIILILMPISGIIENHLLKW</sequence>
<dbReference type="EMBL" id="AY928677">
    <property type="protein sequence ID" value="AAY18246.1"/>
    <property type="molecule type" value="Genomic_DNA"/>
</dbReference>
<dbReference type="SMR" id="Q3ZEC3"/>
<dbReference type="GO" id="GO:0005743">
    <property type="term" value="C:mitochondrial inner membrane"/>
    <property type="evidence" value="ECO:0007669"/>
    <property type="project" value="UniProtKB-SubCell"/>
</dbReference>
<dbReference type="GO" id="GO:0045275">
    <property type="term" value="C:respiratory chain complex III"/>
    <property type="evidence" value="ECO:0007669"/>
    <property type="project" value="InterPro"/>
</dbReference>
<dbReference type="GO" id="GO:0046872">
    <property type="term" value="F:metal ion binding"/>
    <property type="evidence" value="ECO:0007669"/>
    <property type="project" value="UniProtKB-KW"/>
</dbReference>
<dbReference type="GO" id="GO:0008121">
    <property type="term" value="F:ubiquinol-cytochrome-c reductase activity"/>
    <property type="evidence" value="ECO:0007669"/>
    <property type="project" value="InterPro"/>
</dbReference>
<dbReference type="GO" id="GO:0006122">
    <property type="term" value="P:mitochondrial electron transport, ubiquinol to cytochrome c"/>
    <property type="evidence" value="ECO:0007669"/>
    <property type="project" value="TreeGrafter"/>
</dbReference>
<dbReference type="CDD" id="cd00290">
    <property type="entry name" value="cytochrome_b_C"/>
    <property type="match status" value="1"/>
</dbReference>
<dbReference type="CDD" id="cd00284">
    <property type="entry name" value="Cytochrome_b_N"/>
    <property type="match status" value="1"/>
</dbReference>
<dbReference type="FunFam" id="1.20.810.10:FF:000002">
    <property type="entry name" value="Cytochrome b"/>
    <property type="match status" value="1"/>
</dbReference>
<dbReference type="Gene3D" id="1.20.810.10">
    <property type="entry name" value="Cytochrome Bc1 Complex, Chain C"/>
    <property type="match status" value="1"/>
</dbReference>
<dbReference type="InterPro" id="IPR005798">
    <property type="entry name" value="Cyt_b/b6_C"/>
</dbReference>
<dbReference type="InterPro" id="IPR036150">
    <property type="entry name" value="Cyt_b/b6_C_sf"/>
</dbReference>
<dbReference type="InterPro" id="IPR005797">
    <property type="entry name" value="Cyt_b/b6_N"/>
</dbReference>
<dbReference type="InterPro" id="IPR027387">
    <property type="entry name" value="Cytb/b6-like_sf"/>
</dbReference>
<dbReference type="InterPro" id="IPR030689">
    <property type="entry name" value="Cytochrome_b"/>
</dbReference>
<dbReference type="InterPro" id="IPR048260">
    <property type="entry name" value="Cytochrome_b_C_euk/bac"/>
</dbReference>
<dbReference type="InterPro" id="IPR048259">
    <property type="entry name" value="Cytochrome_b_N_euk/bac"/>
</dbReference>
<dbReference type="InterPro" id="IPR016174">
    <property type="entry name" value="Di-haem_cyt_TM"/>
</dbReference>
<dbReference type="PANTHER" id="PTHR19271">
    <property type="entry name" value="CYTOCHROME B"/>
    <property type="match status" value="1"/>
</dbReference>
<dbReference type="PANTHER" id="PTHR19271:SF16">
    <property type="entry name" value="CYTOCHROME B"/>
    <property type="match status" value="1"/>
</dbReference>
<dbReference type="Pfam" id="PF00032">
    <property type="entry name" value="Cytochrom_B_C"/>
    <property type="match status" value="1"/>
</dbReference>
<dbReference type="Pfam" id="PF00033">
    <property type="entry name" value="Cytochrome_B"/>
    <property type="match status" value="1"/>
</dbReference>
<dbReference type="PIRSF" id="PIRSF038885">
    <property type="entry name" value="COB"/>
    <property type="match status" value="1"/>
</dbReference>
<dbReference type="SUPFAM" id="SSF81648">
    <property type="entry name" value="a domain/subunit of cytochrome bc1 complex (Ubiquinol-cytochrome c reductase)"/>
    <property type="match status" value="1"/>
</dbReference>
<dbReference type="SUPFAM" id="SSF81342">
    <property type="entry name" value="Transmembrane di-heme cytochromes"/>
    <property type="match status" value="1"/>
</dbReference>
<dbReference type="PROSITE" id="PS51003">
    <property type="entry name" value="CYTB_CTER"/>
    <property type="match status" value="1"/>
</dbReference>
<dbReference type="PROSITE" id="PS51002">
    <property type="entry name" value="CYTB_NTER"/>
    <property type="match status" value="1"/>
</dbReference>
<geneLocation type="mitochondrion"/>
<comment type="function">
    <text evidence="2">Component of the ubiquinol-cytochrome c reductase complex (complex III or cytochrome b-c1 complex) that is part of the mitochondrial respiratory chain. The b-c1 complex mediates electron transfer from ubiquinol to cytochrome c. Contributes to the generation of a proton gradient across the mitochondrial membrane that is then used for ATP synthesis.</text>
</comment>
<comment type="cofactor">
    <cofactor evidence="2">
        <name>heme b</name>
        <dbReference type="ChEBI" id="CHEBI:60344"/>
    </cofactor>
    <text evidence="2">Binds 2 heme b groups non-covalently.</text>
</comment>
<comment type="subunit">
    <text evidence="2">The cytochrome bc1 complex contains 11 subunits: 3 respiratory subunits (MT-CYB, CYC1 and UQCRFS1), 2 core proteins (UQCRC1 and UQCRC2) and 6 low-molecular weight proteins (UQCRH/QCR6, UQCRB/QCR7, UQCRQ/QCR8, UQCR10/QCR9, UQCR11/QCR10 and a cleavage product of UQCRFS1). This cytochrome bc1 complex then forms a dimer.</text>
</comment>
<comment type="subcellular location">
    <subcellularLocation>
        <location evidence="2">Mitochondrion inner membrane</location>
        <topology evidence="2">Multi-pass membrane protein</topology>
    </subcellularLocation>
</comment>
<comment type="miscellaneous">
    <text evidence="1">Heme 1 (or BL or b562) is low-potential and absorbs at about 562 nm, and heme 2 (or BH or b566) is high-potential and absorbs at about 566 nm.</text>
</comment>
<comment type="similarity">
    <text evidence="3 4">Belongs to the cytochrome b family.</text>
</comment>
<comment type="caution">
    <text evidence="2">The full-length protein contains only eight transmembrane helices, not nine as predicted by bioinformatics tools.</text>
</comment>
<protein>
    <recommendedName>
        <fullName>Cytochrome b</fullName>
    </recommendedName>
    <alternativeName>
        <fullName>Complex III subunit 3</fullName>
    </alternativeName>
    <alternativeName>
        <fullName>Complex III subunit III</fullName>
    </alternativeName>
    <alternativeName>
        <fullName>Cytochrome b-c1 complex subunit 3</fullName>
    </alternativeName>
    <alternativeName>
        <fullName>Ubiquinol-cytochrome-c reductase complex cytochrome b subunit</fullName>
    </alternativeName>
</protein>
<gene>
    <name type="primary">MT-CYB</name>
    <name type="synonym">COB</name>
    <name type="synonym">CYTB</name>
    <name type="synonym">MTCYB</name>
</gene>
<proteinExistence type="inferred from homology"/>
<feature type="chain" id="PRO_0000254743" description="Cytochrome b">
    <location>
        <begin position="1"/>
        <end position="379"/>
    </location>
</feature>
<feature type="transmembrane region" description="Helical" evidence="2">
    <location>
        <begin position="33"/>
        <end position="53"/>
    </location>
</feature>
<feature type="transmembrane region" description="Helical" evidence="2">
    <location>
        <begin position="77"/>
        <end position="98"/>
    </location>
</feature>
<feature type="transmembrane region" description="Helical" evidence="2">
    <location>
        <begin position="113"/>
        <end position="133"/>
    </location>
</feature>
<feature type="transmembrane region" description="Helical" evidence="2">
    <location>
        <begin position="178"/>
        <end position="198"/>
    </location>
</feature>
<feature type="transmembrane region" description="Helical" evidence="2">
    <location>
        <begin position="226"/>
        <end position="246"/>
    </location>
</feature>
<feature type="transmembrane region" description="Helical" evidence="2">
    <location>
        <begin position="288"/>
        <end position="308"/>
    </location>
</feature>
<feature type="transmembrane region" description="Helical" evidence="2">
    <location>
        <begin position="320"/>
        <end position="340"/>
    </location>
</feature>
<feature type="transmembrane region" description="Helical" evidence="2">
    <location>
        <begin position="347"/>
        <end position="367"/>
    </location>
</feature>
<feature type="binding site" description="axial binding residue" evidence="2">
    <location>
        <position position="83"/>
    </location>
    <ligand>
        <name>heme b</name>
        <dbReference type="ChEBI" id="CHEBI:60344"/>
        <label>b562</label>
    </ligand>
    <ligandPart>
        <name>Fe</name>
        <dbReference type="ChEBI" id="CHEBI:18248"/>
    </ligandPart>
</feature>
<feature type="binding site" description="axial binding residue" evidence="2">
    <location>
        <position position="97"/>
    </location>
    <ligand>
        <name>heme b</name>
        <dbReference type="ChEBI" id="CHEBI:60344"/>
        <label>b566</label>
    </ligand>
    <ligandPart>
        <name>Fe</name>
        <dbReference type="ChEBI" id="CHEBI:18248"/>
    </ligandPart>
</feature>
<feature type="binding site" description="axial binding residue" evidence="2">
    <location>
        <position position="182"/>
    </location>
    <ligand>
        <name>heme b</name>
        <dbReference type="ChEBI" id="CHEBI:60344"/>
        <label>b562</label>
    </ligand>
    <ligandPart>
        <name>Fe</name>
        <dbReference type="ChEBI" id="CHEBI:18248"/>
    </ligandPart>
</feature>
<feature type="binding site" description="axial binding residue" evidence="2">
    <location>
        <position position="196"/>
    </location>
    <ligand>
        <name>heme b</name>
        <dbReference type="ChEBI" id="CHEBI:60344"/>
        <label>b566</label>
    </ligand>
    <ligandPart>
        <name>Fe</name>
        <dbReference type="ChEBI" id="CHEBI:18248"/>
    </ligandPart>
</feature>
<feature type="binding site" evidence="2">
    <location>
        <position position="201"/>
    </location>
    <ligand>
        <name>a ubiquinone</name>
        <dbReference type="ChEBI" id="CHEBI:16389"/>
    </ligand>
</feature>
<name>CYB_HYABR</name>
<organism>
    <name type="scientific">Hyaena brunnea</name>
    <name type="common">Brown hyena</name>
    <name type="synonym">Parahyaena brunnea</name>
    <dbReference type="NCBI Taxonomy" id="172271"/>
    <lineage>
        <taxon>Eukaryota</taxon>
        <taxon>Metazoa</taxon>
        <taxon>Chordata</taxon>
        <taxon>Craniata</taxon>
        <taxon>Vertebrata</taxon>
        <taxon>Euteleostomi</taxon>
        <taxon>Mammalia</taxon>
        <taxon>Eutheria</taxon>
        <taxon>Laurasiatheria</taxon>
        <taxon>Carnivora</taxon>
        <taxon>Feliformia</taxon>
        <taxon>Hyaenidae</taxon>
        <taxon>Parahyaena</taxon>
    </lineage>
</organism>
<keyword id="KW-0249">Electron transport</keyword>
<keyword id="KW-0349">Heme</keyword>
<keyword id="KW-0408">Iron</keyword>
<keyword id="KW-0472">Membrane</keyword>
<keyword id="KW-0479">Metal-binding</keyword>
<keyword id="KW-0496">Mitochondrion</keyword>
<keyword id="KW-0999">Mitochondrion inner membrane</keyword>
<keyword id="KW-0679">Respiratory chain</keyword>
<keyword id="KW-0812">Transmembrane</keyword>
<keyword id="KW-1133">Transmembrane helix</keyword>
<keyword id="KW-0813">Transport</keyword>
<keyword id="KW-0830">Ubiquinone</keyword>
<accession>Q3ZEC3</accession>
<reference key="1">
    <citation type="journal article" date="2006" name="Mol. Phylogenet. Evol.">
        <title>Molecular systematics of the Hyaenidae: relationships of a relictual lineage resolved by a molecular supermatrix.</title>
        <authorList>
            <person name="Koepfli K.-P."/>
            <person name="Jenks S.M."/>
            <person name="Eizirik E."/>
            <person name="Zahirpour T."/>
            <person name="Van Valkenburgh B."/>
            <person name="Wayne R.K."/>
        </authorList>
    </citation>
    <scope>NUCLEOTIDE SEQUENCE [GENOMIC DNA]</scope>
</reference>
<evidence type="ECO:0000250" key="1"/>
<evidence type="ECO:0000250" key="2">
    <source>
        <dbReference type="UniProtKB" id="P00157"/>
    </source>
</evidence>
<evidence type="ECO:0000255" key="3">
    <source>
        <dbReference type="PROSITE-ProRule" id="PRU00967"/>
    </source>
</evidence>
<evidence type="ECO:0000255" key="4">
    <source>
        <dbReference type="PROSITE-ProRule" id="PRU00968"/>
    </source>
</evidence>